<keyword id="KW-1185">Reference proteome</keyword>
<keyword id="KW-0687">Ribonucleoprotein</keyword>
<keyword id="KW-0689">Ribosomal protein</keyword>
<gene>
    <name evidence="1" type="primary">rplL</name>
    <name type="ordered locus">E2348C_4293</name>
</gene>
<accession>B7UPE1</accession>
<feature type="chain" id="PRO_1000195795" description="Large ribosomal subunit protein bL12">
    <location>
        <begin position="1"/>
        <end position="121"/>
    </location>
</feature>
<organism>
    <name type="scientific">Escherichia coli O127:H6 (strain E2348/69 / EPEC)</name>
    <dbReference type="NCBI Taxonomy" id="574521"/>
    <lineage>
        <taxon>Bacteria</taxon>
        <taxon>Pseudomonadati</taxon>
        <taxon>Pseudomonadota</taxon>
        <taxon>Gammaproteobacteria</taxon>
        <taxon>Enterobacterales</taxon>
        <taxon>Enterobacteriaceae</taxon>
        <taxon>Escherichia</taxon>
    </lineage>
</organism>
<evidence type="ECO:0000255" key="1">
    <source>
        <dbReference type="HAMAP-Rule" id="MF_00368"/>
    </source>
</evidence>
<evidence type="ECO:0000305" key="2"/>
<comment type="function">
    <text evidence="1">Forms part of the ribosomal stalk which helps the ribosome interact with GTP-bound translation factors. Is thus essential for accurate translation.</text>
</comment>
<comment type="subunit">
    <text evidence="1">Homodimer. Part of the ribosomal stalk of the 50S ribosomal subunit. Forms a multimeric L10(L12)X complex, where L10 forms an elongated spine to which 2 to 4 L12 dimers bind in a sequential fashion. Binds GTP-bound translation factors.</text>
</comment>
<comment type="similarity">
    <text evidence="1">Belongs to the bacterial ribosomal protein bL12 family.</text>
</comment>
<protein>
    <recommendedName>
        <fullName evidence="1">Large ribosomal subunit protein bL12</fullName>
    </recommendedName>
    <alternativeName>
        <fullName evidence="2">50S ribosomal protein L7/L12</fullName>
    </alternativeName>
</protein>
<proteinExistence type="inferred from homology"/>
<reference key="1">
    <citation type="journal article" date="2009" name="J. Bacteriol.">
        <title>Complete genome sequence and comparative genome analysis of enteropathogenic Escherichia coli O127:H6 strain E2348/69.</title>
        <authorList>
            <person name="Iguchi A."/>
            <person name="Thomson N.R."/>
            <person name="Ogura Y."/>
            <person name="Saunders D."/>
            <person name="Ooka T."/>
            <person name="Henderson I.R."/>
            <person name="Harris D."/>
            <person name="Asadulghani M."/>
            <person name="Kurokawa K."/>
            <person name="Dean P."/>
            <person name="Kenny B."/>
            <person name="Quail M.A."/>
            <person name="Thurston S."/>
            <person name="Dougan G."/>
            <person name="Hayashi T."/>
            <person name="Parkhill J."/>
            <person name="Frankel G."/>
        </authorList>
    </citation>
    <scope>NUCLEOTIDE SEQUENCE [LARGE SCALE GENOMIC DNA]</scope>
    <source>
        <strain>E2348/69 / EPEC</strain>
    </source>
</reference>
<dbReference type="EMBL" id="FM180568">
    <property type="protein sequence ID" value="CAS11841.1"/>
    <property type="molecule type" value="Genomic_DNA"/>
</dbReference>
<dbReference type="RefSeq" id="WP_000028878.1">
    <property type="nucleotide sequence ID" value="NC_011601.1"/>
</dbReference>
<dbReference type="SMR" id="B7UPE1"/>
<dbReference type="GeneID" id="86944525"/>
<dbReference type="KEGG" id="ecg:E2348C_4293"/>
<dbReference type="HOGENOM" id="CLU_086499_3_2_6"/>
<dbReference type="Proteomes" id="UP000008205">
    <property type="component" value="Chromosome"/>
</dbReference>
<dbReference type="GO" id="GO:0022625">
    <property type="term" value="C:cytosolic large ribosomal subunit"/>
    <property type="evidence" value="ECO:0007669"/>
    <property type="project" value="TreeGrafter"/>
</dbReference>
<dbReference type="GO" id="GO:0003729">
    <property type="term" value="F:mRNA binding"/>
    <property type="evidence" value="ECO:0007669"/>
    <property type="project" value="TreeGrafter"/>
</dbReference>
<dbReference type="GO" id="GO:0003735">
    <property type="term" value="F:structural constituent of ribosome"/>
    <property type="evidence" value="ECO:0007669"/>
    <property type="project" value="InterPro"/>
</dbReference>
<dbReference type="GO" id="GO:0006412">
    <property type="term" value="P:translation"/>
    <property type="evidence" value="ECO:0007669"/>
    <property type="project" value="UniProtKB-UniRule"/>
</dbReference>
<dbReference type="CDD" id="cd00387">
    <property type="entry name" value="Ribosomal_L7_L12"/>
    <property type="match status" value="1"/>
</dbReference>
<dbReference type="FunFam" id="1.20.5.710:FF:000001">
    <property type="entry name" value="50S ribosomal protein L7/L12"/>
    <property type="match status" value="1"/>
</dbReference>
<dbReference type="FunFam" id="3.30.1390.10:FF:000001">
    <property type="entry name" value="50S ribosomal protein L7/L12"/>
    <property type="match status" value="1"/>
</dbReference>
<dbReference type="Gene3D" id="3.30.1390.10">
    <property type="match status" value="1"/>
</dbReference>
<dbReference type="Gene3D" id="1.20.5.710">
    <property type="entry name" value="Single helix bin"/>
    <property type="match status" value="1"/>
</dbReference>
<dbReference type="HAMAP" id="MF_00368">
    <property type="entry name" value="Ribosomal_bL12"/>
    <property type="match status" value="1"/>
</dbReference>
<dbReference type="InterPro" id="IPR000206">
    <property type="entry name" value="Ribosomal_bL12"/>
</dbReference>
<dbReference type="InterPro" id="IPR013823">
    <property type="entry name" value="Ribosomal_bL12_C"/>
</dbReference>
<dbReference type="InterPro" id="IPR014719">
    <property type="entry name" value="Ribosomal_bL12_C/ClpS-like"/>
</dbReference>
<dbReference type="InterPro" id="IPR008932">
    <property type="entry name" value="Ribosomal_bL12_oligo"/>
</dbReference>
<dbReference type="InterPro" id="IPR036235">
    <property type="entry name" value="Ribosomal_bL12_oligo_N_sf"/>
</dbReference>
<dbReference type="NCBIfam" id="TIGR00855">
    <property type="entry name" value="L12"/>
    <property type="match status" value="1"/>
</dbReference>
<dbReference type="PANTHER" id="PTHR45987">
    <property type="entry name" value="39S RIBOSOMAL PROTEIN L12"/>
    <property type="match status" value="1"/>
</dbReference>
<dbReference type="PANTHER" id="PTHR45987:SF4">
    <property type="entry name" value="LARGE RIBOSOMAL SUBUNIT PROTEIN BL12M"/>
    <property type="match status" value="1"/>
</dbReference>
<dbReference type="Pfam" id="PF00542">
    <property type="entry name" value="Ribosomal_L12"/>
    <property type="match status" value="1"/>
</dbReference>
<dbReference type="Pfam" id="PF16320">
    <property type="entry name" value="Ribosomal_L12_N"/>
    <property type="match status" value="1"/>
</dbReference>
<dbReference type="SUPFAM" id="SSF54736">
    <property type="entry name" value="ClpS-like"/>
    <property type="match status" value="1"/>
</dbReference>
<dbReference type="SUPFAM" id="SSF48300">
    <property type="entry name" value="Ribosomal protein L7/12, oligomerisation (N-terminal) domain"/>
    <property type="match status" value="1"/>
</dbReference>
<name>RL7_ECO27</name>
<sequence>MSITKDQIIEAVAAMSVMDVVELISAMEEKFGVSAAAAVAVAAGPVEAAEEKTEFDVILKAAGANKVAVIKAVRGATGLGLKEAKDLVESAPAALKEGVSKDDAEALKKALEEAGAEVEVK</sequence>